<protein>
    <recommendedName>
        <fullName evidence="1">Large ribosomal subunit protein uL10</fullName>
    </recommendedName>
    <alternativeName>
        <fullName evidence="2">50S ribosomal protein L10</fullName>
    </alternativeName>
</protein>
<gene>
    <name evidence="1" type="primary">rplJ</name>
    <name type="ordered locus">BLA_0333</name>
</gene>
<evidence type="ECO:0000255" key="1">
    <source>
        <dbReference type="HAMAP-Rule" id="MF_00362"/>
    </source>
</evidence>
<evidence type="ECO:0000305" key="2"/>
<proteinExistence type="inferred from homology"/>
<keyword id="KW-1185">Reference proteome</keyword>
<keyword id="KW-0687">Ribonucleoprotein</keyword>
<keyword id="KW-0689">Ribosomal protein</keyword>
<keyword id="KW-0694">RNA-binding</keyword>
<keyword id="KW-0699">rRNA-binding</keyword>
<accession>B8DVY4</accession>
<comment type="function">
    <text evidence="1">Forms part of the ribosomal stalk, playing a central role in the interaction of the ribosome with GTP-bound translation factors.</text>
</comment>
<comment type="subunit">
    <text evidence="1">Part of the ribosomal stalk of the 50S ribosomal subunit. The N-terminus interacts with L11 and the large rRNA to form the base of the stalk. The C-terminus forms an elongated spine to which L12 dimers bind in a sequential fashion forming a multimeric L10(L12)X complex.</text>
</comment>
<comment type="similarity">
    <text evidence="1">Belongs to the universal ribosomal protein uL10 family.</text>
</comment>
<name>RL10_BIFA0</name>
<organism>
    <name type="scientific">Bifidobacterium animalis subsp. lactis (strain AD011)</name>
    <dbReference type="NCBI Taxonomy" id="442563"/>
    <lineage>
        <taxon>Bacteria</taxon>
        <taxon>Bacillati</taxon>
        <taxon>Actinomycetota</taxon>
        <taxon>Actinomycetes</taxon>
        <taxon>Bifidobacteriales</taxon>
        <taxon>Bifidobacteriaceae</taxon>
        <taxon>Bifidobacterium</taxon>
    </lineage>
</organism>
<reference key="1">
    <citation type="journal article" date="2009" name="J. Bacteriol.">
        <title>Genome sequence of the probiotic bacterium Bifidobacterium animalis subsp. lactis AD011.</title>
        <authorList>
            <person name="Kim J.F."/>
            <person name="Jeong H."/>
            <person name="Yu D.S."/>
            <person name="Choi S.-H."/>
            <person name="Hur C.-G."/>
            <person name="Park M.-S."/>
            <person name="Yoon S.H."/>
            <person name="Kim D.-W."/>
            <person name="Ji G.E."/>
            <person name="Park H.-S."/>
            <person name="Oh T.K."/>
        </authorList>
    </citation>
    <scope>NUCLEOTIDE SEQUENCE [LARGE SCALE GENOMIC DNA]</scope>
    <source>
        <strain>AD011</strain>
    </source>
</reference>
<feature type="chain" id="PRO_1000195528" description="Large ribosomal subunit protein uL10">
    <location>
        <begin position="1"/>
        <end position="173"/>
    </location>
</feature>
<sequence length="173" mass="18812">MKRPEKEAVVAELTEQFRNASAVYLTEYRGLTVPQISDLREKLGRDTSYTVAKNTLFRIAAKEAGIEGLDEMLKGPSAVVFVDGDFIEAAKVLRDFAKTNKALIVKGGFADGTVYDAEGAKQLADLKSRPELLAELAGALKGTMSKAAYLFNALPTKVVRTIDALRDKQEKAA</sequence>
<dbReference type="EMBL" id="CP001213">
    <property type="protein sequence ID" value="ACL28635.1"/>
    <property type="molecule type" value="Genomic_DNA"/>
</dbReference>
<dbReference type="RefSeq" id="WP_004268511.1">
    <property type="nucleotide sequence ID" value="NC_011835.1"/>
</dbReference>
<dbReference type="SMR" id="B8DVY4"/>
<dbReference type="STRING" id="442563.BLA_0333"/>
<dbReference type="GeneID" id="29695099"/>
<dbReference type="KEGG" id="bla:BLA_0333"/>
<dbReference type="HOGENOM" id="CLU_092227_1_0_11"/>
<dbReference type="Proteomes" id="UP000002456">
    <property type="component" value="Chromosome"/>
</dbReference>
<dbReference type="GO" id="GO:0015934">
    <property type="term" value="C:large ribosomal subunit"/>
    <property type="evidence" value="ECO:0007669"/>
    <property type="project" value="InterPro"/>
</dbReference>
<dbReference type="GO" id="GO:0070180">
    <property type="term" value="F:large ribosomal subunit rRNA binding"/>
    <property type="evidence" value="ECO:0007669"/>
    <property type="project" value="UniProtKB-UniRule"/>
</dbReference>
<dbReference type="GO" id="GO:0003735">
    <property type="term" value="F:structural constituent of ribosome"/>
    <property type="evidence" value="ECO:0007669"/>
    <property type="project" value="InterPro"/>
</dbReference>
<dbReference type="GO" id="GO:0006412">
    <property type="term" value="P:translation"/>
    <property type="evidence" value="ECO:0007669"/>
    <property type="project" value="UniProtKB-UniRule"/>
</dbReference>
<dbReference type="CDD" id="cd05797">
    <property type="entry name" value="Ribosomal_L10"/>
    <property type="match status" value="1"/>
</dbReference>
<dbReference type="Gene3D" id="3.30.70.1730">
    <property type="match status" value="1"/>
</dbReference>
<dbReference type="Gene3D" id="6.10.250.290">
    <property type="match status" value="1"/>
</dbReference>
<dbReference type="HAMAP" id="MF_00362">
    <property type="entry name" value="Ribosomal_uL10"/>
    <property type="match status" value="1"/>
</dbReference>
<dbReference type="InterPro" id="IPR001790">
    <property type="entry name" value="Ribosomal_uL10"/>
</dbReference>
<dbReference type="InterPro" id="IPR043141">
    <property type="entry name" value="Ribosomal_uL10-like_sf"/>
</dbReference>
<dbReference type="InterPro" id="IPR022973">
    <property type="entry name" value="Ribosomal_uL10_bac"/>
</dbReference>
<dbReference type="InterPro" id="IPR047865">
    <property type="entry name" value="Ribosomal_uL10_bac_type"/>
</dbReference>
<dbReference type="InterPro" id="IPR002363">
    <property type="entry name" value="Ribosomal_uL10_CS_bac"/>
</dbReference>
<dbReference type="NCBIfam" id="NF000955">
    <property type="entry name" value="PRK00099.1-1"/>
    <property type="match status" value="1"/>
</dbReference>
<dbReference type="PANTHER" id="PTHR11560">
    <property type="entry name" value="39S RIBOSOMAL PROTEIN L10, MITOCHONDRIAL"/>
    <property type="match status" value="1"/>
</dbReference>
<dbReference type="Pfam" id="PF00466">
    <property type="entry name" value="Ribosomal_L10"/>
    <property type="match status" value="1"/>
</dbReference>
<dbReference type="SUPFAM" id="SSF160369">
    <property type="entry name" value="Ribosomal protein L10-like"/>
    <property type="match status" value="1"/>
</dbReference>
<dbReference type="PROSITE" id="PS01109">
    <property type="entry name" value="RIBOSOMAL_L10"/>
    <property type="match status" value="1"/>
</dbReference>